<organism>
    <name type="scientific">Thermus thermophilus (strain ATCC BAA-163 / DSM 7039 / HB27)</name>
    <dbReference type="NCBI Taxonomy" id="262724"/>
    <lineage>
        <taxon>Bacteria</taxon>
        <taxon>Thermotogati</taxon>
        <taxon>Deinococcota</taxon>
        <taxon>Deinococci</taxon>
        <taxon>Thermales</taxon>
        <taxon>Thermaceae</taxon>
        <taxon>Thermus</taxon>
    </lineage>
</organism>
<evidence type="ECO:0000269" key="1">
    <source>
    </source>
</evidence>
<evidence type="ECO:0000303" key="2">
    <source>
    </source>
</evidence>
<evidence type="ECO:0000305" key="3"/>
<evidence type="ECO:0000305" key="4">
    <source>
    </source>
</evidence>
<evidence type="ECO:0000312" key="5">
    <source>
        <dbReference type="EMBL" id="AAS80664.1"/>
    </source>
</evidence>
<proteinExistence type="evidence at protein level"/>
<reference key="1">
    <citation type="journal article" date="2004" name="Nat. Biotechnol.">
        <title>The genome sequence of the extreme thermophile Thermus thermophilus.</title>
        <authorList>
            <person name="Henne A."/>
            <person name="Brueggemann H."/>
            <person name="Raasch C."/>
            <person name="Wiezer A."/>
            <person name="Hartsch T."/>
            <person name="Liesegang H."/>
            <person name="Johann A."/>
            <person name="Lienard T."/>
            <person name="Gohl O."/>
            <person name="Martinez-Arias R."/>
            <person name="Jacobi C."/>
            <person name="Starkuviene V."/>
            <person name="Schlenczeck S."/>
            <person name="Dencker S."/>
            <person name="Huber R."/>
            <person name="Klenk H.-P."/>
            <person name="Kramer W."/>
            <person name="Merkl R."/>
            <person name="Gottschalk G."/>
            <person name="Fritz H.-J."/>
        </authorList>
    </citation>
    <scope>NUCLEOTIDE SEQUENCE [LARGE SCALE GENOMIC DNA]</scope>
    <source>
        <strain>ATCC BAA-163 / DSM 7039 / HB27</strain>
    </source>
</reference>
<reference key="2">
    <citation type="journal article" date="2008" name="EMBO J.">
        <title>Common thiolation mechanism in the biosynthesis of tRNA thiouridine and sulphur-containing cofactors.</title>
        <authorList>
            <person name="Shigi N."/>
            <person name="Sakaguchi Y."/>
            <person name="Asai S."/>
            <person name="Suzuki T."/>
            <person name="Watanabe K."/>
        </authorList>
    </citation>
    <scope>FUNCTION</scope>
    <scope>THIOCARBOXYLATION AT GLY-64</scope>
    <scope>AMPYLATION AT GLY-64</scope>
    <source>
        <strain>ATCC BAA-163 / DSM 7039 / HB27</strain>
    </source>
</reference>
<feature type="chain" id="PRO_0000442741" description="Sulfur carrier protein ThiS">
    <location>
        <begin position="1"/>
        <end position="64"/>
    </location>
</feature>
<feature type="modified residue" description="1-thioglycine; alternate" evidence="1">
    <location>
        <position position="64"/>
    </location>
</feature>
<feature type="modified residue" description="Glycyl adenylate; alternate" evidence="1">
    <location>
        <position position="64"/>
    </location>
</feature>
<feature type="cross-link" description="Glycyl cysteine thioester (Gly-Cys) (interchain with C-192 in TtuC); alternate" evidence="4">
    <location>
        <position position="64"/>
    </location>
</feature>
<comment type="function">
    <text evidence="4">Is the sulfur donor in the synthesis of the thiazole phosphate moiety of thiamine phosphate.</text>
</comment>
<comment type="pathway">
    <text evidence="3">Cofactor biosynthesis; thiamine diphosphate biosynthesis.</text>
</comment>
<comment type="PTM">
    <text evidence="1">C-terminal thiocarboxylation occurs in 2 steps, it is first acyl-adenylated (-COAMP) by TtuC, then thiocarboxylated (-COSH) by the cysteine desulfurases IscS or SufS.</text>
</comment>
<comment type="similarity">
    <text evidence="3">Belongs to the sulfur carrier protein ThiS family.</text>
</comment>
<accession>Q72KL7</accession>
<protein>
    <recommendedName>
        <fullName evidence="2">Sulfur carrier protein ThiS</fullName>
    </recommendedName>
    <alternativeName>
        <fullName evidence="3">Thiamine biosynthesis protein ThiS</fullName>
    </alternativeName>
</protein>
<name>THIS_THET2</name>
<dbReference type="EMBL" id="AE017221">
    <property type="protein sequence ID" value="AAS80664.1"/>
    <property type="molecule type" value="Genomic_DNA"/>
</dbReference>
<dbReference type="RefSeq" id="WP_011172767.1">
    <property type="nucleotide sequence ID" value="NC_005835.1"/>
</dbReference>
<dbReference type="SMR" id="Q72KL7"/>
<dbReference type="GeneID" id="3169033"/>
<dbReference type="KEGG" id="tth:TT_C0316"/>
<dbReference type="eggNOG" id="COG2104">
    <property type="taxonomic scope" value="Bacteria"/>
</dbReference>
<dbReference type="HOGENOM" id="CLU_174611_1_0_0"/>
<dbReference type="OrthoDB" id="33120at2"/>
<dbReference type="UniPathway" id="UPA00060"/>
<dbReference type="Proteomes" id="UP000000592">
    <property type="component" value="Chromosome"/>
</dbReference>
<dbReference type="GO" id="GO:0000166">
    <property type="term" value="F:nucleotide binding"/>
    <property type="evidence" value="ECO:0007669"/>
    <property type="project" value="UniProtKB-KW"/>
</dbReference>
<dbReference type="GO" id="GO:0009228">
    <property type="term" value="P:thiamine biosynthetic process"/>
    <property type="evidence" value="ECO:0007669"/>
    <property type="project" value="UniProtKB-KW"/>
</dbReference>
<dbReference type="GO" id="GO:0009229">
    <property type="term" value="P:thiamine diphosphate biosynthetic process"/>
    <property type="evidence" value="ECO:0007669"/>
    <property type="project" value="UniProtKB-UniPathway"/>
</dbReference>
<dbReference type="CDD" id="cd00565">
    <property type="entry name" value="Ubl_ThiS"/>
    <property type="match status" value="1"/>
</dbReference>
<dbReference type="Gene3D" id="3.10.20.30">
    <property type="match status" value="1"/>
</dbReference>
<dbReference type="InterPro" id="IPR012675">
    <property type="entry name" value="Beta-grasp_dom_sf"/>
</dbReference>
<dbReference type="InterPro" id="IPR016155">
    <property type="entry name" value="Mopterin_synth/thiamin_S_b"/>
</dbReference>
<dbReference type="InterPro" id="IPR010035">
    <property type="entry name" value="Thi_S"/>
</dbReference>
<dbReference type="InterPro" id="IPR003749">
    <property type="entry name" value="ThiS/MoaD-like"/>
</dbReference>
<dbReference type="NCBIfam" id="TIGR01683">
    <property type="entry name" value="thiS"/>
    <property type="match status" value="1"/>
</dbReference>
<dbReference type="PANTHER" id="PTHR34472">
    <property type="entry name" value="SULFUR CARRIER PROTEIN THIS"/>
    <property type="match status" value="1"/>
</dbReference>
<dbReference type="PANTHER" id="PTHR34472:SF1">
    <property type="entry name" value="SULFUR CARRIER PROTEIN THIS"/>
    <property type="match status" value="1"/>
</dbReference>
<dbReference type="Pfam" id="PF02597">
    <property type="entry name" value="ThiS"/>
    <property type="match status" value="1"/>
</dbReference>
<dbReference type="SUPFAM" id="SSF54285">
    <property type="entry name" value="MoaD/ThiS"/>
    <property type="match status" value="1"/>
</dbReference>
<sequence>MVWLNGEPRPLEGKTLKEVLEEMGVELKGVAVLLNEEAFLGLEVPDRPLRDGDVVEVVALMQGG</sequence>
<gene>
    <name evidence="2 5" type="primary">thiS</name>
    <name evidence="5" type="ordered locus">TT_C0316</name>
</gene>
<keyword id="KW-0547">Nucleotide-binding</keyword>
<keyword id="KW-0597">Phosphoprotein</keyword>
<keyword id="KW-0784">Thiamine biosynthesis</keyword>
<keyword id="KW-0882">Thioester bond</keyword>